<gene>
    <name type="primary">CLPTM1L</name>
    <name type="ORF">RCJMB04_10g15</name>
</gene>
<feature type="chain" id="PRO_0000331303" description="Lipid scramblase CLPTM1L">
    <location>
        <begin position="1"/>
        <end position="536"/>
    </location>
</feature>
<feature type="topological domain" description="Cytoplasmic" evidence="2">
    <location>
        <begin position="1"/>
        <end position="9"/>
    </location>
</feature>
<feature type="transmembrane region" description="Helical" evidence="2">
    <location>
        <begin position="10"/>
        <end position="30"/>
    </location>
</feature>
<feature type="topological domain" description="Extracellular" evidence="2">
    <location>
        <begin position="31"/>
        <end position="284"/>
    </location>
</feature>
<feature type="transmembrane region" description="Helical" evidence="2">
    <location>
        <begin position="285"/>
        <end position="305"/>
    </location>
</feature>
<feature type="topological domain" description="Cytoplasmic" evidence="2">
    <location>
        <begin position="306"/>
        <end position="324"/>
    </location>
</feature>
<feature type="transmembrane region" description="Helical" evidence="2">
    <location>
        <begin position="325"/>
        <end position="342"/>
    </location>
</feature>
<feature type="topological domain" description="Extracellular" evidence="2">
    <location>
        <begin position="343"/>
        <end position="346"/>
    </location>
</feature>
<feature type="transmembrane region" description="Helical" evidence="2">
    <location>
        <begin position="347"/>
        <end position="364"/>
    </location>
</feature>
<feature type="topological domain" description="Cytoplasmic" evidence="2">
    <location>
        <begin position="365"/>
        <end position="402"/>
    </location>
</feature>
<feature type="transmembrane region" description="Helical" evidence="2">
    <location>
        <begin position="403"/>
        <end position="423"/>
    </location>
</feature>
<feature type="topological domain" description="Extracellular" evidence="2">
    <location>
        <begin position="424"/>
        <end position="428"/>
    </location>
</feature>
<feature type="transmembrane region" description="Helical" evidence="2">
    <location>
        <begin position="429"/>
        <end position="449"/>
    </location>
</feature>
<feature type="topological domain" description="Cytoplasmic" evidence="2">
    <location>
        <begin position="450"/>
        <end position="536"/>
    </location>
</feature>
<feature type="glycosylation site" description="N-linked (GlcNAc...) asparagine" evidence="2">
    <location>
        <position position="92"/>
    </location>
</feature>
<feature type="glycosylation site" description="N-linked (GlcNAc...) asparagine" evidence="2">
    <location>
        <position position="102"/>
    </location>
</feature>
<feature type="glycosylation site" description="N-linked (GlcNAc...) asparagine" evidence="2">
    <location>
        <position position="229"/>
    </location>
</feature>
<comment type="function">
    <text evidence="1">Scramblase that mediates the translocation of glucosaminylphosphatidylinositol (alpha-D-GlcN-(1-6)-(1,2-diacyl-sn-glycero-3-phospho)-1D-myo-inositol, GlcN-PI) across the endoplasmic reticulum (ER) membrane, from the cytosolic leaflet to the luminal leaflet of the ER membrane, where it participates in the biosynthesis of glycosylphosphatidylinositol (GPI). GPI is a lipid glycoconjugate involved in post-translational modification of proteins. Can also translocate 1,2-diacyl-sn-glycero-3-phospho-(1D-myo-inositol) (phosphatidylinositol or PI), as well as several other phospholipids (1,2-diacyl-sn-glycero-3-phosphocholine, 1,2-diacyl-sn-glycero-3-phosphoethanolamine), and N-acetylglucosaminylphosphatidylinositol (GlcNAc-PI) in vitro.</text>
</comment>
<comment type="catalytic activity">
    <reaction evidence="1">
        <text>a 6-(alpha-D-glucosaminyl)-1-(1,2-diacyl-sn-glycero-3-phospho)-1D-myo-inositol(in) = a 6-(alpha-D-glucosaminyl)-1-(1,2-diacyl-sn-glycero-3-phospho)-1D-myo-inositol(out)</text>
        <dbReference type="Rhea" id="RHEA:71491"/>
        <dbReference type="ChEBI" id="CHEBI:57997"/>
    </reaction>
</comment>
<comment type="catalytic activity">
    <reaction evidence="1">
        <text>6-(alpha-D-glucosaminyl)-(1-octadecanoyl,2-(9Z)-octadecenoyl-sn-glycero-3-phospho)-1D-myo-inositol(in) = 6-(alpha-D-glucosaminyl)-(1-octadecanoyl,2-(9Z)-octadecenoyl-sn-glycero-3-phospho)-1D-myo-inositol(out)</text>
        <dbReference type="Rhea" id="RHEA:71495"/>
        <dbReference type="ChEBI" id="CHEBI:190691"/>
    </reaction>
</comment>
<comment type="catalytic activity">
    <reaction evidence="1">
        <text>a 1,2-diacyl-sn-glycero-3-phospho-(1D-myo-inositol)(in) = a 1,2-diacyl-sn-glycero-3-phospho-(1D-myo-inositol)(out)</text>
        <dbReference type="Rhea" id="RHEA:38691"/>
        <dbReference type="ChEBI" id="CHEBI:57880"/>
    </reaction>
</comment>
<comment type="catalytic activity">
    <reaction evidence="1">
        <text>a 1,2-diacyl-sn-glycero-3-phosphocholine(in) = a 1,2-diacyl-sn-glycero-3-phosphocholine(out)</text>
        <dbReference type="Rhea" id="RHEA:38571"/>
        <dbReference type="ChEBI" id="CHEBI:57643"/>
    </reaction>
</comment>
<comment type="catalytic activity">
    <reaction evidence="1">
        <text>a 1,2-diacyl-sn-glycero-3-phosphoethanolamine(in) = a 1,2-diacyl-sn-glycero-3-phosphoethanolamine(out)</text>
        <dbReference type="Rhea" id="RHEA:38895"/>
        <dbReference type="ChEBI" id="CHEBI:64612"/>
    </reaction>
</comment>
<comment type="subcellular location">
    <subcellularLocation>
        <location evidence="3">Endoplasmic reticulum membrane</location>
        <topology evidence="2">Multi-pass membrane protein</topology>
    </subcellularLocation>
</comment>
<comment type="similarity">
    <text evidence="3">Belongs to the CLPTM1 family.</text>
</comment>
<organism>
    <name type="scientific">Gallus gallus</name>
    <name type="common">Chicken</name>
    <dbReference type="NCBI Taxonomy" id="9031"/>
    <lineage>
        <taxon>Eukaryota</taxon>
        <taxon>Metazoa</taxon>
        <taxon>Chordata</taxon>
        <taxon>Craniata</taxon>
        <taxon>Vertebrata</taxon>
        <taxon>Euteleostomi</taxon>
        <taxon>Archelosauria</taxon>
        <taxon>Archosauria</taxon>
        <taxon>Dinosauria</taxon>
        <taxon>Saurischia</taxon>
        <taxon>Theropoda</taxon>
        <taxon>Coelurosauria</taxon>
        <taxon>Aves</taxon>
        <taxon>Neognathae</taxon>
        <taxon>Galloanserae</taxon>
        <taxon>Galliformes</taxon>
        <taxon>Phasianidae</taxon>
        <taxon>Phasianinae</taxon>
        <taxon>Gallus</taxon>
    </lineage>
</organism>
<evidence type="ECO:0000250" key="1">
    <source>
        <dbReference type="UniProtKB" id="Q96KA5"/>
    </source>
</evidence>
<evidence type="ECO:0000255" key="2"/>
<evidence type="ECO:0000305" key="3"/>
<keyword id="KW-0053">Apoptosis</keyword>
<keyword id="KW-0256">Endoplasmic reticulum</keyword>
<keyword id="KW-0325">Glycoprotein</keyword>
<keyword id="KW-0445">Lipid transport</keyword>
<keyword id="KW-0472">Membrane</keyword>
<keyword id="KW-1185">Reference proteome</keyword>
<keyword id="KW-0812">Transmembrane</keyword>
<keyword id="KW-1133">Transmembrane helix</keyword>
<keyword id="KW-0813">Transport</keyword>
<sequence length="536" mass="61649">MLSRSSFTSLAVGVFAVYVAHTCWVMYGIVYTRPCPSGGAAACVWPYLARRPKLQLSVYTTTRSNIGAESNIDLVLNVEDFDIESKFERTVNVSVPKKTRNNGTLYAYIFLHHAGVLPWHDGKQVHIVSPLTTYMVPKPEEINLLTGESTTQQIEAEKQTSALDEPVSHWRSRLTLNVMVEDFVFDGSSLPADVHRYMKMVQLGKTVHYLPILFIDQLSNRVKDLMVINRSTTELPLTVSYDKISLGKLRFWIHMQDAVYSLQQFGFSEKDADEVKGIFVDTNLYFLALTFFVAAFHLLFDFLAFKNDISFWKKKRSMIGMSTKAVLWRCFSTVVIFLFLLDEQTSLLVLIPAGIGAVIELWKVKKALKMTVKWQGIRPKVQFGASNDSEKKTEEYDTQAMKYLSYLLYPLCIGGAAYSLLNVKYKSWYSWLINSFVNGVYAFGFLFMLPQLFVNYKMKSVAHLPWKAFTYKAFNTFIDDIFAFIITMPTSHRLACFRDDVVFLVYLYQRWLYPVDKSRVNEYGESYEEKPKKKSS</sequence>
<reference key="1">
    <citation type="journal article" date="2005" name="Genome Biol.">
        <title>Full-length cDNAs from chicken bursal lymphocytes to facilitate gene function analysis.</title>
        <authorList>
            <person name="Caldwell R.B."/>
            <person name="Kierzek A.M."/>
            <person name="Arakawa H."/>
            <person name="Bezzubov Y."/>
            <person name="Zaim J."/>
            <person name="Fiedler P."/>
            <person name="Kutter S."/>
            <person name="Blagodatski A."/>
            <person name="Kostovska D."/>
            <person name="Koter M."/>
            <person name="Plachy J."/>
            <person name="Carninci P."/>
            <person name="Hayashizaki Y."/>
            <person name="Buerstedde J.-M."/>
        </authorList>
    </citation>
    <scope>NUCLEOTIDE SEQUENCE [LARGE SCALE MRNA]</scope>
    <source>
        <strain>CB</strain>
        <tissue>Bursa of Fabricius</tissue>
    </source>
</reference>
<protein>
    <recommendedName>
        <fullName evidence="3">Lipid scramblase CLPTM1L</fullName>
    </recommendedName>
    <alternativeName>
        <fullName evidence="1">Cisplatin resistance-related protein 9</fullName>
        <shortName>CRR9p</shortName>
    </alternativeName>
    <alternativeName>
        <fullName>Cleft lip and palate transmembrane protein 1-like protein</fullName>
        <shortName>CLPTM1-like protein</shortName>
    </alternativeName>
</protein>
<accession>Q5ZKJ0</accession>
<name>CLP1L_CHICK</name>
<proteinExistence type="evidence at transcript level"/>
<dbReference type="EMBL" id="AJ720094">
    <property type="protein sequence ID" value="CAG31753.1"/>
    <property type="molecule type" value="mRNA"/>
</dbReference>
<dbReference type="RefSeq" id="NP_001382887.1">
    <property type="nucleotide sequence ID" value="NM_001395958.1"/>
</dbReference>
<dbReference type="FunCoup" id="Q5ZKJ0">
    <property type="interactions" value="1839"/>
</dbReference>
<dbReference type="STRING" id="9031.ENSGALP00000021513"/>
<dbReference type="GlyCosmos" id="Q5ZKJ0">
    <property type="glycosylation" value="3 sites, No reported glycans"/>
</dbReference>
<dbReference type="GlyGen" id="Q5ZKJ0">
    <property type="glycosylation" value="3 sites"/>
</dbReference>
<dbReference type="PaxDb" id="9031-ENSGALP00000021513"/>
<dbReference type="GeneID" id="420973"/>
<dbReference type="VEuPathDB" id="HostDB:geneid_420973"/>
<dbReference type="eggNOG" id="KOG2489">
    <property type="taxonomic scope" value="Eukaryota"/>
</dbReference>
<dbReference type="InParanoid" id="Q5ZKJ0"/>
<dbReference type="OMA" id="TTMWRAF"/>
<dbReference type="OrthoDB" id="378564at2759"/>
<dbReference type="PhylomeDB" id="Q5ZKJ0"/>
<dbReference type="Proteomes" id="UP000000539">
    <property type="component" value="Unassembled WGS sequence"/>
</dbReference>
<dbReference type="GO" id="GO:0012505">
    <property type="term" value="C:endomembrane system"/>
    <property type="evidence" value="ECO:0000318"/>
    <property type="project" value="GO_Central"/>
</dbReference>
<dbReference type="GO" id="GO:0005789">
    <property type="term" value="C:endoplasmic reticulum membrane"/>
    <property type="evidence" value="ECO:0000250"/>
    <property type="project" value="UniProtKB"/>
</dbReference>
<dbReference type="GO" id="GO:0016020">
    <property type="term" value="C:membrane"/>
    <property type="evidence" value="ECO:0000318"/>
    <property type="project" value="GO_Central"/>
</dbReference>
<dbReference type="GO" id="GO:0017128">
    <property type="term" value="F:phospholipid scramblase activity"/>
    <property type="evidence" value="ECO:0000250"/>
    <property type="project" value="UniProtKB"/>
</dbReference>
<dbReference type="GO" id="GO:0006915">
    <property type="term" value="P:apoptotic process"/>
    <property type="evidence" value="ECO:0007669"/>
    <property type="project" value="UniProtKB-KW"/>
</dbReference>
<dbReference type="InterPro" id="IPR008429">
    <property type="entry name" value="CLPTM1"/>
</dbReference>
<dbReference type="PANTHER" id="PTHR21347">
    <property type="entry name" value="CLEFT LIP AND PALATE ASSOCIATED TRANSMEMBRANE PROTEIN-RELATED"/>
    <property type="match status" value="1"/>
</dbReference>
<dbReference type="PANTHER" id="PTHR21347:SF0">
    <property type="entry name" value="LIPID SCRAMBLASE CLPTM1L"/>
    <property type="match status" value="1"/>
</dbReference>
<dbReference type="Pfam" id="PF05602">
    <property type="entry name" value="CLPTM1"/>
    <property type="match status" value="1"/>
</dbReference>